<sequence>MVPETGLAPETGSSGTVAAVVPAAGSGERLAAGIPKAFCEIDGASMLARAVAGLLDSKVVDHVVVAVPADRVDEAKRLLPGQATVVAGGADRTASVRLALAAVPGNPAFVLVHDAARALTPPALIARVVQALRDGHRAVVPALPLHDTVKAVDANGVVLGTPERDGLRAVQTPQGFATDLLLRAYAAGAGTAGFTDDASLVEHVGGQVQVVDGDPLAFKITTQLDLLLAETIVRR</sequence>
<evidence type="ECO:0000255" key="1">
    <source>
        <dbReference type="HAMAP-Rule" id="MF_00108"/>
    </source>
</evidence>
<evidence type="ECO:0007829" key="2">
    <source>
        <dbReference type="PDB" id="7KMW"/>
    </source>
</evidence>
<feature type="chain" id="PRO_0000075591" description="2-C-methyl-D-erythritol 4-phosphate cytidylyltransferase">
    <location>
        <begin position="1"/>
        <end position="235"/>
    </location>
</feature>
<feature type="site" description="Transition state stabilizer" evidence="1">
    <location>
        <position position="29"/>
    </location>
</feature>
<feature type="site" description="Transition state stabilizer" evidence="1">
    <location>
        <position position="36"/>
    </location>
</feature>
<feature type="site" description="Positions MEP for the nucleophilic attack" evidence="1">
    <location>
        <position position="164"/>
    </location>
</feature>
<feature type="site" description="Positions MEP for the nucleophilic attack" evidence="1">
    <location>
        <position position="219"/>
    </location>
</feature>
<feature type="turn" evidence="2">
    <location>
        <begin position="9"/>
        <end position="14"/>
    </location>
</feature>
<feature type="strand" evidence="2">
    <location>
        <begin position="17"/>
        <end position="22"/>
    </location>
</feature>
<feature type="helix" evidence="2">
    <location>
        <begin position="36"/>
        <end position="38"/>
    </location>
</feature>
<feature type="helix" evidence="2">
    <location>
        <begin position="46"/>
        <end position="56"/>
    </location>
</feature>
<feature type="strand" evidence="2">
    <location>
        <begin position="61"/>
        <end position="67"/>
    </location>
</feature>
<feature type="helix" evidence="2">
    <location>
        <begin position="69"/>
        <end position="71"/>
    </location>
</feature>
<feature type="helix" evidence="2">
    <location>
        <begin position="72"/>
        <end position="78"/>
    </location>
</feature>
<feature type="strand" evidence="2">
    <location>
        <begin position="84"/>
        <end position="87"/>
    </location>
</feature>
<feature type="strand" evidence="2">
    <location>
        <begin position="90"/>
        <end position="92"/>
    </location>
</feature>
<feature type="helix" evidence="2">
    <location>
        <begin position="93"/>
        <end position="101"/>
    </location>
</feature>
<feature type="strand" evidence="2">
    <location>
        <begin position="103"/>
        <end position="105"/>
    </location>
</feature>
<feature type="strand" evidence="2">
    <location>
        <begin position="108"/>
        <end position="112"/>
    </location>
</feature>
<feature type="helix" evidence="2">
    <location>
        <begin position="122"/>
        <end position="133"/>
    </location>
</feature>
<feature type="strand" evidence="2">
    <location>
        <begin position="137"/>
        <end position="144"/>
    </location>
</feature>
<feature type="strand" evidence="2">
    <location>
        <begin position="146"/>
        <end position="152"/>
    </location>
</feature>
<feature type="strand" evidence="2">
    <location>
        <begin position="156"/>
        <end position="160"/>
    </location>
</feature>
<feature type="helix" evidence="2">
    <location>
        <begin position="164"/>
        <end position="166"/>
    </location>
</feature>
<feature type="strand" evidence="2">
    <location>
        <begin position="167"/>
        <end position="170"/>
    </location>
</feature>
<feature type="strand" evidence="2">
    <location>
        <begin position="174"/>
        <end position="177"/>
    </location>
</feature>
<feature type="helix" evidence="2">
    <location>
        <begin position="178"/>
        <end position="188"/>
    </location>
</feature>
<feature type="helix" evidence="2">
    <location>
        <begin position="189"/>
        <end position="191"/>
    </location>
</feature>
<feature type="turn" evidence="2">
    <location>
        <begin position="192"/>
        <end position="194"/>
    </location>
</feature>
<feature type="helix" evidence="2">
    <location>
        <begin position="197"/>
        <end position="203"/>
    </location>
</feature>
<feature type="strand" evidence="2">
    <location>
        <begin position="209"/>
        <end position="212"/>
    </location>
</feature>
<feature type="helix" evidence="2">
    <location>
        <begin position="215"/>
        <end position="217"/>
    </location>
</feature>
<feature type="helix" evidence="2">
    <location>
        <begin position="223"/>
        <end position="233"/>
    </location>
</feature>
<accession>Q743W5</accession>
<comment type="function">
    <text evidence="1">Catalyzes the formation of 4-diphosphocytidyl-2-C-methyl-D-erythritol from CTP and 2-C-methyl-D-erythritol 4-phosphate (MEP).</text>
</comment>
<comment type="catalytic activity">
    <reaction evidence="1">
        <text>2-C-methyl-D-erythritol 4-phosphate + CTP + H(+) = 4-CDP-2-C-methyl-D-erythritol + diphosphate</text>
        <dbReference type="Rhea" id="RHEA:13429"/>
        <dbReference type="ChEBI" id="CHEBI:15378"/>
        <dbReference type="ChEBI" id="CHEBI:33019"/>
        <dbReference type="ChEBI" id="CHEBI:37563"/>
        <dbReference type="ChEBI" id="CHEBI:57823"/>
        <dbReference type="ChEBI" id="CHEBI:58262"/>
        <dbReference type="EC" id="2.7.7.60"/>
    </reaction>
</comment>
<comment type="pathway">
    <text evidence="1">Isoprenoid biosynthesis; isopentenyl diphosphate biosynthesis via DXP pathway; isopentenyl diphosphate from 1-deoxy-D-xylulose 5-phosphate: step 2/6.</text>
</comment>
<comment type="similarity">
    <text evidence="1">Belongs to the IspD/TarI cytidylyltransferase family. IspD subfamily.</text>
</comment>
<organism>
    <name type="scientific">Mycolicibacterium paratuberculosis (strain ATCC BAA-968 / K-10)</name>
    <name type="common">Mycobacterium paratuberculosis</name>
    <dbReference type="NCBI Taxonomy" id="262316"/>
    <lineage>
        <taxon>Bacteria</taxon>
        <taxon>Bacillati</taxon>
        <taxon>Actinomycetota</taxon>
        <taxon>Actinomycetes</taxon>
        <taxon>Mycobacteriales</taxon>
        <taxon>Mycobacteriaceae</taxon>
        <taxon>Mycobacterium</taxon>
        <taxon>Mycobacterium avium complex (MAC)</taxon>
    </lineage>
</organism>
<name>ISPD_MYCPA</name>
<dbReference type="EC" id="2.7.7.60" evidence="1"/>
<dbReference type="EMBL" id="AE016958">
    <property type="protein sequence ID" value="AAS02793.1"/>
    <property type="molecule type" value="Genomic_DNA"/>
</dbReference>
<dbReference type="PDB" id="7KMW">
    <property type="method" value="X-ray"/>
    <property type="resolution" value="2.35 A"/>
    <property type="chains" value="A/B/C/D=2-235"/>
</dbReference>
<dbReference type="PDBsum" id="7KMW"/>
<dbReference type="SMR" id="Q743W5"/>
<dbReference type="STRING" id="262316.MAP_0476"/>
<dbReference type="KEGG" id="mpa:MAP_0476"/>
<dbReference type="eggNOG" id="COG1211">
    <property type="taxonomic scope" value="Bacteria"/>
</dbReference>
<dbReference type="HOGENOM" id="CLU_061281_1_1_11"/>
<dbReference type="UniPathway" id="UPA00056">
    <property type="reaction ID" value="UER00093"/>
</dbReference>
<dbReference type="Proteomes" id="UP000000580">
    <property type="component" value="Chromosome"/>
</dbReference>
<dbReference type="GO" id="GO:0050518">
    <property type="term" value="F:2-C-methyl-D-erythritol 4-phosphate cytidylyltransferase activity"/>
    <property type="evidence" value="ECO:0007669"/>
    <property type="project" value="UniProtKB-UniRule"/>
</dbReference>
<dbReference type="GO" id="GO:0019288">
    <property type="term" value="P:isopentenyl diphosphate biosynthetic process, methylerythritol 4-phosphate pathway"/>
    <property type="evidence" value="ECO:0007669"/>
    <property type="project" value="UniProtKB-UniRule"/>
</dbReference>
<dbReference type="CDD" id="cd02516">
    <property type="entry name" value="CDP-ME_synthetase"/>
    <property type="match status" value="1"/>
</dbReference>
<dbReference type="FunFam" id="3.90.550.10:FF:000003">
    <property type="entry name" value="2-C-methyl-D-erythritol 4-phosphate cytidylyltransferase"/>
    <property type="match status" value="1"/>
</dbReference>
<dbReference type="Gene3D" id="3.90.550.10">
    <property type="entry name" value="Spore Coat Polysaccharide Biosynthesis Protein SpsA, Chain A"/>
    <property type="match status" value="1"/>
</dbReference>
<dbReference type="HAMAP" id="MF_00108">
    <property type="entry name" value="IspD"/>
    <property type="match status" value="1"/>
</dbReference>
<dbReference type="InterPro" id="IPR001228">
    <property type="entry name" value="IspD"/>
</dbReference>
<dbReference type="InterPro" id="IPR034683">
    <property type="entry name" value="IspD/TarI"/>
</dbReference>
<dbReference type="InterPro" id="IPR050088">
    <property type="entry name" value="IspD/TarI_cytidylyltransf_bact"/>
</dbReference>
<dbReference type="InterPro" id="IPR018294">
    <property type="entry name" value="ISPD_synthase_CS"/>
</dbReference>
<dbReference type="InterPro" id="IPR029044">
    <property type="entry name" value="Nucleotide-diphossugar_trans"/>
</dbReference>
<dbReference type="NCBIfam" id="TIGR00453">
    <property type="entry name" value="ispD"/>
    <property type="match status" value="1"/>
</dbReference>
<dbReference type="PANTHER" id="PTHR32125">
    <property type="entry name" value="2-C-METHYL-D-ERYTHRITOL 4-PHOSPHATE CYTIDYLYLTRANSFERASE, CHLOROPLASTIC"/>
    <property type="match status" value="1"/>
</dbReference>
<dbReference type="PANTHER" id="PTHR32125:SF4">
    <property type="entry name" value="2-C-METHYL-D-ERYTHRITOL 4-PHOSPHATE CYTIDYLYLTRANSFERASE, CHLOROPLASTIC"/>
    <property type="match status" value="1"/>
</dbReference>
<dbReference type="Pfam" id="PF01128">
    <property type="entry name" value="IspD"/>
    <property type="match status" value="1"/>
</dbReference>
<dbReference type="SUPFAM" id="SSF53448">
    <property type="entry name" value="Nucleotide-diphospho-sugar transferases"/>
    <property type="match status" value="1"/>
</dbReference>
<dbReference type="PROSITE" id="PS01295">
    <property type="entry name" value="ISPD"/>
    <property type="match status" value="1"/>
</dbReference>
<keyword id="KW-0002">3D-structure</keyword>
<keyword id="KW-0414">Isoprene biosynthesis</keyword>
<keyword id="KW-0548">Nucleotidyltransferase</keyword>
<keyword id="KW-1185">Reference proteome</keyword>
<keyword id="KW-0808">Transferase</keyword>
<protein>
    <recommendedName>
        <fullName evidence="1">2-C-methyl-D-erythritol 4-phosphate cytidylyltransferase</fullName>
        <ecNumber evidence="1">2.7.7.60</ecNumber>
    </recommendedName>
    <alternativeName>
        <fullName evidence="1">4-diphosphocytidyl-2C-methyl-D-erythritol synthase</fullName>
    </alternativeName>
    <alternativeName>
        <fullName evidence="1">MEP cytidylyltransferase</fullName>
        <shortName evidence="1">MCT</shortName>
    </alternativeName>
</protein>
<reference key="1">
    <citation type="journal article" date="2005" name="Proc. Natl. Acad. Sci. U.S.A.">
        <title>The complete genome sequence of Mycobacterium avium subspecies paratuberculosis.</title>
        <authorList>
            <person name="Li L."/>
            <person name="Bannantine J.P."/>
            <person name="Zhang Q."/>
            <person name="Amonsin A."/>
            <person name="May B.J."/>
            <person name="Alt D."/>
            <person name="Banerji N."/>
            <person name="Kanjilal S."/>
            <person name="Kapur V."/>
        </authorList>
    </citation>
    <scope>NUCLEOTIDE SEQUENCE [LARGE SCALE GENOMIC DNA]</scope>
    <source>
        <strain>ATCC BAA-968 / K-10</strain>
    </source>
</reference>
<gene>
    <name evidence="1" type="primary">ispD</name>
    <name type="ordered locus">MAP_0476</name>
</gene>
<proteinExistence type="evidence at protein level"/>